<feature type="signal peptide" evidence="2">
    <location>
        <begin position="1"/>
        <end position="21"/>
    </location>
</feature>
<feature type="chain" id="PRO_0000396643" description="Putative UDP-glucuronosyltransferase ugt-47" evidence="2">
    <location>
        <begin position="22"/>
        <end position="536"/>
    </location>
</feature>
<feature type="transmembrane region" description="Helical" evidence="2">
    <location>
        <begin position="497"/>
        <end position="517"/>
    </location>
</feature>
<feature type="glycosylation site" description="N-linked (GlcNAc...) asparagine" evidence="3">
    <location>
        <position position="52"/>
    </location>
</feature>
<feature type="glycosylation site" description="N-linked (GlcNAc...) asparagine" evidence="2">
    <location>
        <position position="308"/>
    </location>
</feature>
<reference evidence="5" key="1">
    <citation type="journal article" date="1998" name="Science">
        <title>Genome sequence of the nematode C. elegans: a platform for investigating biology.</title>
        <authorList>
            <consortium name="The C. elegans sequencing consortium"/>
        </authorList>
    </citation>
    <scope>NUCLEOTIDE SEQUENCE [LARGE SCALE GENOMIC DNA]</scope>
    <source>
        <strain>Bristol N2</strain>
    </source>
</reference>
<reference evidence="4" key="2">
    <citation type="journal article" date="2007" name="Mol. Cell. Proteomics">
        <title>Proteomics reveals N-linked glycoprotein diversity in Caenorhabditis elegans and suggests an atypical translocation mechanism for integral membrane proteins.</title>
        <authorList>
            <person name="Kaji H."/>
            <person name="Kamiie J."/>
            <person name="Kawakami H."/>
            <person name="Kido K."/>
            <person name="Yamauchi Y."/>
            <person name="Shinkawa T."/>
            <person name="Taoka M."/>
            <person name="Takahashi N."/>
            <person name="Isobe T."/>
        </authorList>
    </citation>
    <scope>GLYCOSYLATION [LARGE SCALE ANALYSIS] AT ASN-52</scope>
    <scope>IDENTIFICATION BY MASS SPECTROMETRY</scope>
    <source>
        <strain evidence="3">Bristol N2</strain>
    </source>
</reference>
<keyword id="KW-0325">Glycoprotein</keyword>
<keyword id="KW-0328">Glycosyltransferase</keyword>
<keyword id="KW-0472">Membrane</keyword>
<keyword id="KW-1185">Reference proteome</keyword>
<keyword id="KW-0732">Signal</keyword>
<keyword id="KW-0808">Transferase</keyword>
<keyword id="KW-0812">Transmembrane</keyword>
<keyword id="KW-1133">Transmembrane helix</keyword>
<sequence length="536" mass="61449">MFRYHSILLLAILYFFEYGLAYKILVFSPATSKSHLISNGRIADELAKAGHNVTLLEIDFLGIVDSTKSAKLVKKTIVRVPKKMQGFKNVIQSFSEGVMEDEGLFELLKGNIAYQTVYNDLCEEFLENEVMFNKLKDENFDAFFAEQLNICGFGYAKALGIQRKFLISSCPFFSHVYDYTSHPAPYASVPFISDMSPEPTYLERTNNLLRGITINTFFYFSHNRLTSIFRKKFGDDFPAITEIVRNVDIIFLATDEIIDFSSPTLPNLVHVGGLGVDDDTTEMGPVFEAEMKKGDKGVIYFSLGTIANTSTIDKKVMESFLEIVKKFPDYHFLIRADKNDKNTKDKATEISNVFVSDWLPQPAILHHPRLRTFITHAGYNGLMEAALAGVPLITIPFMFDQNLNSRAIEKKGWGIRRDKKQFLTEPNAIEEAIREMLTNPSYTKQAHRVRDLMRNKPMGARDRFIKTTEWVIQNGGVHELLTEGRDLSIIKYYNLDIIVPCFFVAFYFIIFPFFKLFGGFYYYSCFGHIESKYKKD</sequence>
<protein>
    <recommendedName>
        <fullName>Putative UDP-glucuronosyltransferase ugt-47</fullName>
        <shortName>UDPGT 47</shortName>
        <ecNumber>2.4.1.17</ecNumber>
    </recommendedName>
</protein>
<dbReference type="EC" id="2.4.1.17"/>
<dbReference type="EMBL" id="Z70782">
    <property type="protein sequence ID" value="CAA94845.2"/>
    <property type="molecule type" value="Genomic_DNA"/>
</dbReference>
<dbReference type="PIR" id="T23893">
    <property type="entry name" value="T23893"/>
</dbReference>
<dbReference type="RefSeq" id="NP_505595.2">
    <property type="nucleotide sequence ID" value="NM_073194.5"/>
</dbReference>
<dbReference type="SMR" id="Q21706"/>
<dbReference type="FunCoup" id="Q21706">
    <property type="interactions" value="3"/>
</dbReference>
<dbReference type="STRING" id="6239.R04B5.9.1"/>
<dbReference type="CAZy" id="GT1">
    <property type="family name" value="Glycosyltransferase Family 1"/>
</dbReference>
<dbReference type="GlyCosmos" id="Q21706">
    <property type="glycosylation" value="2 sites, No reported glycans"/>
</dbReference>
<dbReference type="iPTMnet" id="Q21706"/>
<dbReference type="PaxDb" id="6239-R04B5.9"/>
<dbReference type="PeptideAtlas" id="Q21706"/>
<dbReference type="EnsemblMetazoa" id="R04B5.9.1">
    <property type="protein sequence ID" value="R04B5.9.1"/>
    <property type="gene ID" value="WBGene00011006"/>
</dbReference>
<dbReference type="GeneID" id="187570"/>
<dbReference type="KEGG" id="cel:CELE_R04B5.9"/>
<dbReference type="UCSC" id="R04B5.9">
    <property type="organism name" value="c. elegans"/>
</dbReference>
<dbReference type="AGR" id="WB:WBGene00011006"/>
<dbReference type="CTD" id="187570"/>
<dbReference type="WormBase" id="R04B5.9">
    <property type="protein sequence ID" value="CE37984"/>
    <property type="gene ID" value="WBGene00011006"/>
    <property type="gene designation" value="ugt-47"/>
</dbReference>
<dbReference type="eggNOG" id="KOG1192">
    <property type="taxonomic scope" value="Eukaryota"/>
</dbReference>
<dbReference type="GeneTree" id="ENSGT00970000196182"/>
<dbReference type="HOGENOM" id="CLU_012949_1_3_1"/>
<dbReference type="InParanoid" id="Q21706"/>
<dbReference type="OMA" id="NICGFGY"/>
<dbReference type="OrthoDB" id="5835829at2759"/>
<dbReference type="PhylomeDB" id="Q21706"/>
<dbReference type="PRO" id="PR:Q21706"/>
<dbReference type="Proteomes" id="UP000001940">
    <property type="component" value="Chromosome V"/>
</dbReference>
<dbReference type="Bgee" id="WBGene00011006">
    <property type="expression patterns" value="Expressed in adult organism and 1 other cell type or tissue"/>
</dbReference>
<dbReference type="GO" id="GO:0016020">
    <property type="term" value="C:membrane"/>
    <property type="evidence" value="ECO:0007669"/>
    <property type="project" value="UniProtKB-SubCell"/>
</dbReference>
<dbReference type="GO" id="GO:0015020">
    <property type="term" value="F:glucuronosyltransferase activity"/>
    <property type="evidence" value="ECO:0007669"/>
    <property type="project" value="UniProtKB-EC"/>
</dbReference>
<dbReference type="GO" id="GO:0008194">
    <property type="term" value="F:UDP-glycosyltransferase activity"/>
    <property type="evidence" value="ECO:0000318"/>
    <property type="project" value="GO_Central"/>
</dbReference>
<dbReference type="CDD" id="cd03784">
    <property type="entry name" value="GT1_Gtf-like"/>
    <property type="match status" value="1"/>
</dbReference>
<dbReference type="FunFam" id="3.40.50.2000:FF:000021">
    <property type="entry name" value="UDP-glucuronosyltransferase"/>
    <property type="match status" value="1"/>
</dbReference>
<dbReference type="Gene3D" id="3.40.50.2000">
    <property type="entry name" value="Glycogen Phosphorylase B"/>
    <property type="match status" value="1"/>
</dbReference>
<dbReference type="InterPro" id="IPR050271">
    <property type="entry name" value="UDP-glycosyltransferase"/>
</dbReference>
<dbReference type="InterPro" id="IPR002213">
    <property type="entry name" value="UDP_glucos_trans"/>
</dbReference>
<dbReference type="PANTHER" id="PTHR48043">
    <property type="entry name" value="EG:EG0003.4 PROTEIN-RELATED"/>
    <property type="match status" value="1"/>
</dbReference>
<dbReference type="PANTHER" id="PTHR48043:SF13">
    <property type="entry name" value="UDP-GLUCURONOSYLTRANSFERASE UGT-47-RELATED"/>
    <property type="match status" value="1"/>
</dbReference>
<dbReference type="Pfam" id="PF00201">
    <property type="entry name" value="UDPGT"/>
    <property type="match status" value="1"/>
</dbReference>
<dbReference type="SUPFAM" id="SSF53756">
    <property type="entry name" value="UDP-Glycosyltransferase/glycogen phosphorylase"/>
    <property type="match status" value="1"/>
</dbReference>
<organism>
    <name type="scientific">Caenorhabditis elegans</name>
    <dbReference type="NCBI Taxonomy" id="6239"/>
    <lineage>
        <taxon>Eukaryota</taxon>
        <taxon>Metazoa</taxon>
        <taxon>Ecdysozoa</taxon>
        <taxon>Nematoda</taxon>
        <taxon>Chromadorea</taxon>
        <taxon>Rhabditida</taxon>
        <taxon>Rhabditina</taxon>
        <taxon>Rhabditomorpha</taxon>
        <taxon>Rhabditoidea</taxon>
        <taxon>Rhabditidae</taxon>
        <taxon>Peloderinae</taxon>
        <taxon>Caenorhabditis</taxon>
    </lineage>
</organism>
<proteinExistence type="evidence at protein level"/>
<gene>
    <name type="primary">ugt-47</name>
    <name type="ORF">R04B5.9</name>
</gene>
<comment type="catalytic activity">
    <reaction evidence="1">
        <text>glucuronate acceptor + UDP-alpha-D-glucuronate = acceptor beta-D-glucuronoside + UDP + H(+)</text>
        <dbReference type="Rhea" id="RHEA:21032"/>
        <dbReference type="ChEBI" id="CHEBI:15378"/>
        <dbReference type="ChEBI" id="CHEBI:58052"/>
        <dbReference type="ChEBI" id="CHEBI:58223"/>
        <dbReference type="ChEBI" id="CHEBI:132367"/>
        <dbReference type="ChEBI" id="CHEBI:132368"/>
        <dbReference type="EC" id="2.4.1.17"/>
    </reaction>
</comment>
<comment type="subcellular location">
    <subcellularLocation>
        <location evidence="2">Membrane</location>
        <topology evidence="2">Single-pass membrane protein</topology>
    </subcellularLocation>
</comment>
<comment type="similarity">
    <text evidence="2">Belongs to the UDP-glycosyltransferase family.</text>
</comment>
<name>UGT47_CAEEL</name>
<accession>Q21706</accession>
<evidence type="ECO:0000250" key="1">
    <source>
        <dbReference type="UniProtKB" id="Q9BY64"/>
    </source>
</evidence>
<evidence type="ECO:0000255" key="2"/>
<evidence type="ECO:0000269" key="3">
    <source>
    </source>
</evidence>
<evidence type="ECO:0000305" key="4"/>
<evidence type="ECO:0000312" key="5">
    <source>
        <dbReference type="EMBL" id="CAA94845.2"/>
    </source>
</evidence>